<feature type="chain" id="PRO_1000075236" description="Ribosomal RNA small subunit methyltransferase G">
    <location>
        <begin position="1"/>
        <end position="239"/>
    </location>
</feature>
<feature type="region of interest" description="Disordered" evidence="2">
    <location>
        <begin position="214"/>
        <end position="239"/>
    </location>
</feature>
<feature type="binding site" evidence="1">
    <location>
        <position position="77"/>
    </location>
    <ligand>
        <name>S-adenosyl-L-methionine</name>
        <dbReference type="ChEBI" id="CHEBI:59789"/>
    </ligand>
</feature>
<feature type="binding site" evidence="1">
    <location>
        <position position="82"/>
    </location>
    <ligand>
        <name>S-adenosyl-L-methionine</name>
        <dbReference type="ChEBI" id="CHEBI:59789"/>
    </ligand>
</feature>
<feature type="binding site" evidence="1">
    <location>
        <begin position="128"/>
        <end position="129"/>
    </location>
    <ligand>
        <name>S-adenosyl-L-methionine</name>
        <dbReference type="ChEBI" id="CHEBI:59789"/>
    </ligand>
</feature>
<feature type="binding site" evidence="1">
    <location>
        <position position="146"/>
    </location>
    <ligand>
        <name>S-adenosyl-L-methionine</name>
        <dbReference type="ChEBI" id="CHEBI:59789"/>
    </ligand>
</feature>
<sequence length="239" mass="27373">MTVEWLAEQLKEHNIELTETQKQQFQTYYRLLVEWNEKMNLTSITDEHDVYLKHFYDSIAPSFYFDFNQPISICDVGAGAGFPSIPLKIMFPQLKVTIVDSLNKRIQFLNHLASELQLQDVSFIHDRAETFGKGVYRESYDVVTARAVARLSVLSELCLPLIKKGGQFVALKSSKGEEELEEAKFAISVLGGNVTETHTFKLPEDAGERQMFIIDKKRQTPKKYPRKPGTPNKTPLLEK</sequence>
<reference key="1">
    <citation type="submission" date="2007-05" db="EMBL/GenBank/DDBJ databases">
        <title>Complete sequence of chromosome of Staphylococcus aureus subsp. aureus JH9.</title>
        <authorList>
            <consortium name="US DOE Joint Genome Institute"/>
            <person name="Copeland A."/>
            <person name="Lucas S."/>
            <person name="Lapidus A."/>
            <person name="Barry K."/>
            <person name="Detter J.C."/>
            <person name="Glavina del Rio T."/>
            <person name="Hammon N."/>
            <person name="Israni S."/>
            <person name="Pitluck S."/>
            <person name="Chain P."/>
            <person name="Malfatti S."/>
            <person name="Shin M."/>
            <person name="Vergez L."/>
            <person name="Schmutz J."/>
            <person name="Larimer F."/>
            <person name="Land M."/>
            <person name="Hauser L."/>
            <person name="Kyrpides N."/>
            <person name="Kim E."/>
            <person name="Tomasz A."/>
            <person name="Richardson P."/>
        </authorList>
    </citation>
    <scope>NUCLEOTIDE SEQUENCE [LARGE SCALE GENOMIC DNA]</scope>
    <source>
        <strain>JH9</strain>
    </source>
</reference>
<organism>
    <name type="scientific">Staphylococcus aureus (strain JH9)</name>
    <dbReference type="NCBI Taxonomy" id="359786"/>
    <lineage>
        <taxon>Bacteria</taxon>
        <taxon>Bacillati</taxon>
        <taxon>Bacillota</taxon>
        <taxon>Bacilli</taxon>
        <taxon>Bacillales</taxon>
        <taxon>Staphylococcaceae</taxon>
        <taxon>Staphylococcus</taxon>
    </lineage>
</organism>
<proteinExistence type="inferred from homology"/>
<gene>
    <name evidence="1" type="primary">rsmG</name>
    <name type="ordered locus">SaurJH9_2732</name>
</gene>
<name>RSMG_STAA9</name>
<evidence type="ECO:0000255" key="1">
    <source>
        <dbReference type="HAMAP-Rule" id="MF_00074"/>
    </source>
</evidence>
<evidence type="ECO:0000256" key="2">
    <source>
        <dbReference type="SAM" id="MobiDB-lite"/>
    </source>
</evidence>
<protein>
    <recommendedName>
        <fullName evidence="1">Ribosomal RNA small subunit methyltransferase G</fullName>
        <ecNumber evidence="1">2.1.1.-</ecNumber>
    </recommendedName>
    <alternativeName>
        <fullName evidence="1">16S rRNA 7-methylguanosine methyltransferase</fullName>
        <shortName evidence="1">16S rRNA m7G methyltransferase</shortName>
    </alternativeName>
</protein>
<accession>A5IWD5</accession>
<keyword id="KW-0963">Cytoplasm</keyword>
<keyword id="KW-0489">Methyltransferase</keyword>
<keyword id="KW-0698">rRNA processing</keyword>
<keyword id="KW-0949">S-adenosyl-L-methionine</keyword>
<keyword id="KW-0808">Transferase</keyword>
<comment type="function">
    <text evidence="1">Specifically methylates the N7 position of guanine in position 535 of 16S rRNA.</text>
</comment>
<comment type="subcellular location">
    <subcellularLocation>
        <location evidence="1">Cytoplasm</location>
    </subcellularLocation>
</comment>
<comment type="similarity">
    <text evidence="1">Belongs to the methyltransferase superfamily. RNA methyltransferase RsmG family.</text>
</comment>
<dbReference type="EC" id="2.1.1.-" evidence="1"/>
<dbReference type="EMBL" id="CP000703">
    <property type="protein sequence ID" value="ABQ50508.1"/>
    <property type="molecule type" value="Genomic_DNA"/>
</dbReference>
<dbReference type="RefSeq" id="WP_000215587.1">
    <property type="nucleotide sequence ID" value="NC_009487.1"/>
</dbReference>
<dbReference type="SMR" id="A5IWD5"/>
<dbReference type="KEGG" id="saj:SaurJH9_2732"/>
<dbReference type="HOGENOM" id="CLU_065341_0_0_9"/>
<dbReference type="GO" id="GO:0005829">
    <property type="term" value="C:cytosol"/>
    <property type="evidence" value="ECO:0007669"/>
    <property type="project" value="TreeGrafter"/>
</dbReference>
<dbReference type="GO" id="GO:0070043">
    <property type="term" value="F:rRNA (guanine-N7-)-methyltransferase activity"/>
    <property type="evidence" value="ECO:0007669"/>
    <property type="project" value="UniProtKB-UniRule"/>
</dbReference>
<dbReference type="CDD" id="cd02440">
    <property type="entry name" value="AdoMet_MTases"/>
    <property type="match status" value="1"/>
</dbReference>
<dbReference type="FunFam" id="3.40.50.150:FF:000041">
    <property type="entry name" value="Ribosomal RNA small subunit methyltransferase G"/>
    <property type="match status" value="1"/>
</dbReference>
<dbReference type="Gene3D" id="3.40.50.150">
    <property type="entry name" value="Vaccinia Virus protein VP39"/>
    <property type="match status" value="1"/>
</dbReference>
<dbReference type="HAMAP" id="MF_00074">
    <property type="entry name" value="16SrRNA_methyltr_G"/>
    <property type="match status" value="1"/>
</dbReference>
<dbReference type="InterPro" id="IPR003682">
    <property type="entry name" value="rRNA_ssu_MeTfrase_G"/>
</dbReference>
<dbReference type="InterPro" id="IPR029063">
    <property type="entry name" value="SAM-dependent_MTases_sf"/>
</dbReference>
<dbReference type="NCBIfam" id="TIGR00138">
    <property type="entry name" value="rsmG_gidB"/>
    <property type="match status" value="1"/>
</dbReference>
<dbReference type="PANTHER" id="PTHR31760">
    <property type="entry name" value="S-ADENOSYL-L-METHIONINE-DEPENDENT METHYLTRANSFERASES SUPERFAMILY PROTEIN"/>
    <property type="match status" value="1"/>
</dbReference>
<dbReference type="PANTHER" id="PTHR31760:SF0">
    <property type="entry name" value="S-ADENOSYL-L-METHIONINE-DEPENDENT METHYLTRANSFERASES SUPERFAMILY PROTEIN"/>
    <property type="match status" value="1"/>
</dbReference>
<dbReference type="Pfam" id="PF02527">
    <property type="entry name" value="GidB"/>
    <property type="match status" value="1"/>
</dbReference>
<dbReference type="PIRSF" id="PIRSF003078">
    <property type="entry name" value="GidB"/>
    <property type="match status" value="1"/>
</dbReference>
<dbReference type="SUPFAM" id="SSF53335">
    <property type="entry name" value="S-adenosyl-L-methionine-dependent methyltransferases"/>
    <property type="match status" value="1"/>
</dbReference>